<evidence type="ECO:0000250" key="1"/>
<evidence type="ECO:0000250" key="2">
    <source>
        <dbReference type="UniProtKB" id="Q9NPH0"/>
    </source>
</evidence>
<evidence type="ECO:0000269" key="3">
    <source>
    </source>
</evidence>
<evidence type="ECO:0000305" key="4"/>
<evidence type="ECO:0000305" key="5">
    <source>
    </source>
</evidence>
<proteinExistence type="evidence at protein level"/>
<organism>
    <name type="scientific">Bos taurus</name>
    <name type="common">Bovine</name>
    <dbReference type="NCBI Taxonomy" id="9913"/>
    <lineage>
        <taxon>Eukaryota</taxon>
        <taxon>Metazoa</taxon>
        <taxon>Chordata</taxon>
        <taxon>Craniata</taxon>
        <taxon>Vertebrata</taxon>
        <taxon>Euteleostomi</taxon>
        <taxon>Mammalia</taxon>
        <taxon>Eutheria</taxon>
        <taxon>Laurasiatheria</taxon>
        <taxon>Artiodactyla</taxon>
        <taxon>Ruminantia</taxon>
        <taxon>Pecora</taxon>
        <taxon>Bovidae</taxon>
        <taxon>Bovinae</taxon>
        <taxon>Bos</taxon>
    </lineage>
</organism>
<gene>
    <name type="primary">ACP6</name>
</gene>
<dbReference type="EC" id="3.1.3.2" evidence="3"/>
<dbReference type="EMBL" id="DAAA02007328">
    <property type="status" value="NOT_ANNOTATED_CDS"/>
    <property type="molecule type" value="Genomic_DNA"/>
</dbReference>
<dbReference type="EMBL" id="BC146121">
    <property type="protein sequence ID" value="AAI46122.1"/>
    <property type="molecule type" value="mRNA"/>
</dbReference>
<dbReference type="RefSeq" id="NP_001092843.1">
    <property type="nucleotide sequence ID" value="NM_001099373.2"/>
</dbReference>
<dbReference type="SMR" id="A6H757"/>
<dbReference type="FunCoup" id="A6H757">
    <property type="interactions" value="245"/>
</dbReference>
<dbReference type="STRING" id="9913.ENSBTAP00000062638"/>
<dbReference type="PaxDb" id="9913-ENSBTAP00000022675"/>
<dbReference type="Ensembl" id="ENSBTAT00000022675.5">
    <property type="protein sequence ID" value="ENSBTAP00000022675.4"/>
    <property type="gene ID" value="ENSBTAG00000017051.6"/>
</dbReference>
<dbReference type="GeneID" id="515738"/>
<dbReference type="KEGG" id="bta:515738"/>
<dbReference type="CTD" id="51205"/>
<dbReference type="VEuPathDB" id="HostDB:ENSBTAG00000017051"/>
<dbReference type="VGNC" id="VGNC:52602">
    <property type="gene designation" value="ACP6"/>
</dbReference>
<dbReference type="eggNOG" id="KOG3720">
    <property type="taxonomic scope" value="Eukaryota"/>
</dbReference>
<dbReference type="GeneTree" id="ENSGT00940000158408"/>
<dbReference type="HOGENOM" id="CLU_030431_5_0_1"/>
<dbReference type="InParanoid" id="A6H757"/>
<dbReference type="OMA" id="SWPPFTS"/>
<dbReference type="OrthoDB" id="10257284at2759"/>
<dbReference type="TreeFam" id="TF318821"/>
<dbReference type="BRENDA" id="3.1.3.106">
    <property type="organism ID" value="908"/>
</dbReference>
<dbReference type="Reactome" id="R-BTA-1483166">
    <property type="pathway name" value="Synthesis of PA"/>
</dbReference>
<dbReference type="Proteomes" id="UP000009136">
    <property type="component" value="Chromosome 3"/>
</dbReference>
<dbReference type="Bgee" id="ENSBTAG00000017051">
    <property type="expression patterns" value="Expressed in cortex of kidney and 106 other cell types or tissues"/>
</dbReference>
<dbReference type="GO" id="GO:0005739">
    <property type="term" value="C:mitochondrion"/>
    <property type="evidence" value="ECO:0000250"/>
    <property type="project" value="UniProtKB"/>
</dbReference>
<dbReference type="GO" id="GO:0003993">
    <property type="term" value="F:acid phosphatase activity"/>
    <property type="evidence" value="ECO:0007669"/>
    <property type="project" value="UniProtKB-EC"/>
</dbReference>
<dbReference type="GO" id="GO:0052642">
    <property type="term" value="F:lysophosphatidic acid phosphatase activity"/>
    <property type="evidence" value="ECO:0000250"/>
    <property type="project" value="UniProtKB"/>
</dbReference>
<dbReference type="GO" id="GO:2001311">
    <property type="term" value="P:lysobisphosphatidic acid metabolic process"/>
    <property type="evidence" value="ECO:0000250"/>
    <property type="project" value="UniProtKB"/>
</dbReference>
<dbReference type="CDD" id="cd07061">
    <property type="entry name" value="HP_HAP_like"/>
    <property type="match status" value="1"/>
</dbReference>
<dbReference type="FunFam" id="3.40.50.1240:FF:000030">
    <property type="entry name" value="Lysophosphatidic acid phosphatase type 6"/>
    <property type="match status" value="1"/>
</dbReference>
<dbReference type="Gene3D" id="3.40.50.1240">
    <property type="entry name" value="Phosphoglycerate mutase-like"/>
    <property type="match status" value="1"/>
</dbReference>
<dbReference type="InterPro" id="IPR033379">
    <property type="entry name" value="Acid_Pase_AS"/>
</dbReference>
<dbReference type="InterPro" id="IPR000560">
    <property type="entry name" value="His_Pase_clade-2"/>
</dbReference>
<dbReference type="InterPro" id="IPR029033">
    <property type="entry name" value="His_PPase_superfam"/>
</dbReference>
<dbReference type="InterPro" id="IPR050645">
    <property type="entry name" value="Histidine_acid_phosphatase"/>
</dbReference>
<dbReference type="PANTHER" id="PTHR11567">
    <property type="entry name" value="ACID PHOSPHATASE-RELATED"/>
    <property type="match status" value="1"/>
</dbReference>
<dbReference type="PANTHER" id="PTHR11567:SF202">
    <property type="entry name" value="LYSOPHOSPHATIDIC ACID PHOSPHATASE TYPE 6"/>
    <property type="match status" value="1"/>
</dbReference>
<dbReference type="Pfam" id="PF00328">
    <property type="entry name" value="His_Phos_2"/>
    <property type="match status" value="1"/>
</dbReference>
<dbReference type="SUPFAM" id="SSF53254">
    <property type="entry name" value="Phosphoglycerate mutase-like"/>
    <property type="match status" value="1"/>
</dbReference>
<dbReference type="PROSITE" id="PS00616">
    <property type="entry name" value="HIS_ACID_PHOSPHAT_1"/>
    <property type="match status" value="1"/>
</dbReference>
<comment type="function">
    <text evidence="3">Hydrolyzes lysophosphatidic acid (LPA) containing a medium length fatty acid chain to the corresponding monoacylglycerol. Has highest activity with lysophosphatidic acid containing myristate (C14:0), monounsaturated oleate (C18:1) or palmitate (C16:0), and lower activity with C18:0 and C6:0 lysophosphatidic acid.</text>
</comment>
<comment type="catalytic activity">
    <reaction evidence="3">
        <text>a phosphate monoester + H2O = an alcohol + phosphate</text>
        <dbReference type="Rhea" id="RHEA:15017"/>
        <dbReference type="ChEBI" id="CHEBI:15377"/>
        <dbReference type="ChEBI" id="CHEBI:30879"/>
        <dbReference type="ChEBI" id="CHEBI:43474"/>
        <dbReference type="ChEBI" id="CHEBI:67140"/>
        <dbReference type="EC" id="3.1.3.2"/>
    </reaction>
    <physiologicalReaction direction="left-to-right" evidence="5">
        <dbReference type="Rhea" id="RHEA:15018"/>
    </physiologicalReaction>
</comment>
<comment type="catalytic activity">
    <reaction evidence="2">
        <text>1-(9Z-octadecenoyl)-sn-glycero-3-phosphate + H2O = 1-(9Z-octadecenoyl)-sn-glycerol + phosphate</text>
        <dbReference type="Rhea" id="RHEA:39835"/>
        <dbReference type="ChEBI" id="CHEBI:15377"/>
        <dbReference type="ChEBI" id="CHEBI:43474"/>
        <dbReference type="ChEBI" id="CHEBI:74544"/>
        <dbReference type="ChEBI" id="CHEBI:75757"/>
    </reaction>
    <physiologicalReaction direction="left-to-right" evidence="2">
        <dbReference type="Rhea" id="RHEA:39836"/>
    </physiologicalReaction>
</comment>
<comment type="subunit">
    <text evidence="2">Monomer.</text>
</comment>
<comment type="subcellular location">
    <subcellularLocation>
        <location evidence="2">Mitochondrion</location>
    </subcellularLocation>
</comment>
<comment type="tissue specificity">
    <text evidence="3">Detected in brain (at protein level).</text>
</comment>
<comment type="similarity">
    <text evidence="4">Belongs to the histidine acid phosphatase family.</text>
</comment>
<comment type="caution">
    <text evidence="4">It is uncertain whether Met-1 or Met-10 is the initiator.</text>
</comment>
<sequence length="429" mass="48945">MISRVFKLRMWAPVGVLTSLTYCLHQRRVALAEPGGADQQNPVDRNLLELKMVQVVFRHGARSPLKPLPQEDQQVEWKSQLLEVPPQTQLEYTVTNLAGGPKPHSPFDSQYHETTLKGGMFAGQLTKVGMEQMFALGERLRKNYVEDIPFLSPTFNPLEVFIRSTNIYRNLESTRCLLAGLFQRQKEGPIVIHTDEASSEVLYPNYQYCWNLQKRTRGRRQAASLQPGISEDLKKVKEGMGIASSDEVDFLVLLDNMAAEQVHSLPSCPTLKRFAWMIEQRAVDTALYILQWEDREGLQMAVGPFLHILESNLLKVVDPATPPSKTRKLYLYAAHDVTLMPLLMTLGIFDHKWPPFAVDLTMELYQHRESKEWFVQLYYRGKEQVPKGCPDGLCPLDKFLNTISVYTLSPEKYHMLCSEAQMMGLGNGE</sequence>
<name>PPA6_BOVIN</name>
<accession>A6H757</accession>
<keyword id="KW-0903">Direct protein sequencing</keyword>
<keyword id="KW-0378">Hydrolase</keyword>
<keyword id="KW-0443">Lipid metabolism</keyword>
<keyword id="KW-0496">Mitochondrion</keyword>
<keyword id="KW-1208">Phospholipid metabolism</keyword>
<keyword id="KW-1185">Reference proteome</keyword>
<keyword id="KW-0809">Transit peptide</keyword>
<protein>
    <recommendedName>
        <fullName>Lysophosphatidic acid phosphatase type 6</fullName>
        <ecNumber evidence="3">3.1.3.2</ecNumber>
    </recommendedName>
</protein>
<reference key="1">
    <citation type="journal article" date="2009" name="Genome Biol.">
        <title>A whole-genome assembly of the domestic cow, Bos taurus.</title>
        <authorList>
            <person name="Zimin A.V."/>
            <person name="Delcher A.L."/>
            <person name="Florea L."/>
            <person name="Kelley D.R."/>
            <person name="Schatz M.C."/>
            <person name="Puiu D."/>
            <person name="Hanrahan F."/>
            <person name="Pertea G."/>
            <person name="Van Tassell C.P."/>
            <person name="Sonstegard T.S."/>
            <person name="Marcais G."/>
            <person name="Roberts M."/>
            <person name="Subramanian P."/>
            <person name="Yorke J.A."/>
            <person name="Salzberg S.L."/>
        </authorList>
    </citation>
    <scope>NUCLEOTIDE SEQUENCE [LARGE SCALE GENOMIC DNA]</scope>
    <source>
        <strain>Hereford</strain>
    </source>
</reference>
<reference key="2">
    <citation type="submission" date="2007-06" db="EMBL/GenBank/DDBJ databases">
        <authorList>
            <consortium name="NIH - Mammalian Gene Collection (MGC) project"/>
        </authorList>
    </citation>
    <scope>NUCLEOTIDE SEQUENCE [LARGE SCALE MRNA]</scope>
    <source>
        <tissue>Liver</tissue>
    </source>
</reference>
<reference key="3">
    <citation type="journal article" date="1999" name="J. Biol. Chem.">
        <title>Isolation of a cDNA encoding human lysophosphatidic acid phosphatase that is involved in the regulation of mitochondrial lipid biosynthesis.</title>
        <authorList>
            <person name="Hiroyama M."/>
            <person name="Takenawa T."/>
        </authorList>
    </citation>
    <scope>PROTEIN SEQUENCE OF 52-65; 80-98; 128-141; 187-198; 372-382 AND 399-412</scope>
    <scope>FUNCTION</scope>
    <scope>CATALYTIC ACTIVITY</scope>
    <scope>TISSUE SPECIFICITY</scope>
</reference>
<feature type="transit peptide" description="Mitochondrion" evidence="1">
    <location>
        <begin position="1"/>
        <end position="32"/>
    </location>
</feature>
<feature type="chain" id="PRO_0000424239" description="Lysophosphatidic acid phosphatase type 6" evidence="1">
    <location>
        <begin position="33"/>
        <end position="429"/>
    </location>
</feature>
<feature type="region of interest" description="Substrate binding" evidence="1">
    <location>
        <begin position="58"/>
        <end position="169"/>
    </location>
</feature>
<feature type="active site" description="Nucleophile" evidence="1">
    <location>
        <position position="59"/>
    </location>
</feature>
<feature type="active site" description="Proton donor" evidence="1">
    <location>
        <position position="336"/>
    </location>
</feature>